<keyword id="KW-0210">Decarboxylase</keyword>
<keyword id="KW-0456">Lyase</keyword>
<keyword id="KW-0460">Magnesium</keyword>
<keyword id="KW-0479">Metal-binding</keyword>
<keyword id="KW-0620">Polyamine biosynthesis</keyword>
<keyword id="KW-0663">Pyridoxal phosphate</keyword>
<keyword id="KW-1185">Reference proteome</keyword>
<keyword id="KW-0745">Spermidine biosynthesis</keyword>
<name>SPEA_SHEWM</name>
<organism>
    <name type="scientific">Shewanella woodyi (strain ATCC 51908 / MS32)</name>
    <dbReference type="NCBI Taxonomy" id="392500"/>
    <lineage>
        <taxon>Bacteria</taxon>
        <taxon>Pseudomonadati</taxon>
        <taxon>Pseudomonadota</taxon>
        <taxon>Gammaproteobacteria</taxon>
        <taxon>Alteromonadales</taxon>
        <taxon>Shewanellaceae</taxon>
        <taxon>Shewanella</taxon>
    </lineage>
</organism>
<gene>
    <name evidence="1" type="primary">speA</name>
    <name type="ordered locus">Swoo_2057</name>
</gene>
<sequence>MSNWSINDARTGYNVNYWSQGLYGISDEGEATVSPDPTRPECSIGLNELAKDMVKSGVNLPVLVRFPQILHHRVNSLCQAFNQAIQKYQYQADYLLVYPIKVNQQQTVVEEILASQVEKEVPQLGLEAGSKPELMAVLAMAQKASSVIICNGYKDIEYIRLALIGEKLGHKVYIVLEKLSELKTVLEESKKLGVTPRLGLRVRLAFQGKGKWQASGGEKSKFGLSASQVLTVIESLKSEEMLDSLQLLHFHLGSQIANIRDIRQGVSEAGRFYCELQKLGANVKCFDVGGGLAVDYDGTRSQSSSSMNYGLTEYANNIVSVLTDICNEYEQPMPRIISESGCYLTAHHAVLITDVIGTEAYKPEDIQPPAEDAPQLLHNMWHSWNEISGRADQRALIEIYHDCQSDLTEVHSLFALGQLSLTDRAWAEQVNLRVCHELQGVMSSKYRFHRPIIDELTEKLADKFFVNFSLFQSLPDAWGIDQVFPIMPLSGLDKAPERRAVMLDITCDSDGTIDQYVDGQGIETTLPVPAWSAESPYLIGFFLVGAYQEILGDMHNLFGDTNSAVIRLDDDGRTNIESVLAGDTVADVLRYVNLDAVSFMRTYEELVNKHIQEDERANILEELQLGLKGYTYLEDFS</sequence>
<proteinExistence type="inferred from homology"/>
<feature type="chain" id="PRO_1000145604" description="Biosynthetic arginine decarboxylase">
    <location>
        <begin position="1"/>
        <end position="637"/>
    </location>
</feature>
<feature type="binding site" evidence="1">
    <location>
        <begin position="286"/>
        <end position="296"/>
    </location>
    <ligand>
        <name>substrate</name>
    </ligand>
</feature>
<feature type="modified residue" description="N6-(pyridoxal phosphate)lysine" evidence="1">
    <location>
        <position position="101"/>
    </location>
</feature>
<evidence type="ECO:0000255" key="1">
    <source>
        <dbReference type="HAMAP-Rule" id="MF_01417"/>
    </source>
</evidence>
<accession>B1KRD4</accession>
<protein>
    <recommendedName>
        <fullName evidence="1">Biosynthetic arginine decarboxylase</fullName>
        <shortName evidence="1">ADC</shortName>
        <ecNumber evidence="1">4.1.1.19</ecNumber>
    </recommendedName>
</protein>
<dbReference type="EC" id="4.1.1.19" evidence="1"/>
<dbReference type="EMBL" id="CP000961">
    <property type="protein sequence ID" value="ACA86341.1"/>
    <property type="molecule type" value="Genomic_DNA"/>
</dbReference>
<dbReference type="RefSeq" id="WP_012324686.1">
    <property type="nucleotide sequence ID" value="NC_010506.1"/>
</dbReference>
<dbReference type="SMR" id="B1KRD4"/>
<dbReference type="STRING" id="392500.Swoo_2057"/>
<dbReference type="KEGG" id="swd:Swoo_2057"/>
<dbReference type="eggNOG" id="COG1166">
    <property type="taxonomic scope" value="Bacteria"/>
</dbReference>
<dbReference type="HOGENOM" id="CLU_027243_1_0_6"/>
<dbReference type="UniPathway" id="UPA00186">
    <property type="reaction ID" value="UER00284"/>
</dbReference>
<dbReference type="Proteomes" id="UP000002168">
    <property type="component" value="Chromosome"/>
</dbReference>
<dbReference type="GO" id="GO:0008792">
    <property type="term" value="F:arginine decarboxylase activity"/>
    <property type="evidence" value="ECO:0007669"/>
    <property type="project" value="UniProtKB-UniRule"/>
</dbReference>
<dbReference type="GO" id="GO:0046872">
    <property type="term" value="F:metal ion binding"/>
    <property type="evidence" value="ECO:0007669"/>
    <property type="project" value="UniProtKB-KW"/>
</dbReference>
<dbReference type="GO" id="GO:0006527">
    <property type="term" value="P:arginine catabolic process"/>
    <property type="evidence" value="ECO:0007669"/>
    <property type="project" value="InterPro"/>
</dbReference>
<dbReference type="GO" id="GO:0033388">
    <property type="term" value="P:putrescine biosynthetic process from arginine"/>
    <property type="evidence" value="ECO:0007669"/>
    <property type="project" value="TreeGrafter"/>
</dbReference>
<dbReference type="GO" id="GO:0008295">
    <property type="term" value="P:spermidine biosynthetic process"/>
    <property type="evidence" value="ECO:0007669"/>
    <property type="project" value="UniProtKB-UniRule"/>
</dbReference>
<dbReference type="CDD" id="cd06830">
    <property type="entry name" value="PLPDE_III_ADC"/>
    <property type="match status" value="1"/>
</dbReference>
<dbReference type="FunFam" id="1.10.287.3440:FF:000001">
    <property type="entry name" value="Biosynthetic arginine decarboxylase"/>
    <property type="match status" value="1"/>
</dbReference>
<dbReference type="FunFam" id="2.40.37.10:FF:000001">
    <property type="entry name" value="Biosynthetic arginine decarboxylase"/>
    <property type="match status" value="1"/>
</dbReference>
<dbReference type="FunFam" id="3.20.20.10:FF:000001">
    <property type="entry name" value="Biosynthetic arginine decarboxylase"/>
    <property type="match status" value="1"/>
</dbReference>
<dbReference type="Gene3D" id="1.10.287.3440">
    <property type="match status" value="1"/>
</dbReference>
<dbReference type="Gene3D" id="1.20.58.930">
    <property type="match status" value="1"/>
</dbReference>
<dbReference type="Gene3D" id="3.20.20.10">
    <property type="entry name" value="Alanine racemase"/>
    <property type="match status" value="1"/>
</dbReference>
<dbReference type="Gene3D" id="2.40.37.10">
    <property type="entry name" value="Lyase, Ornithine Decarboxylase, Chain A, domain 1"/>
    <property type="match status" value="1"/>
</dbReference>
<dbReference type="HAMAP" id="MF_01417">
    <property type="entry name" value="SpeA"/>
    <property type="match status" value="1"/>
</dbReference>
<dbReference type="InterPro" id="IPR009006">
    <property type="entry name" value="Ala_racemase/Decarboxylase_C"/>
</dbReference>
<dbReference type="InterPro" id="IPR040634">
    <property type="entry name" value="Arg_decarb_HB"/>
</dbReference>
<dbReference type="InterPro" id="IPR041128">
    <property type="entry name" value="Arg_decarbox_C"/>
</dbReference>
<dbReference type="InterPro" id="IPR002985">
    <property type="entry name" value="Arg_decrbxlase"/>
</dbReference>
<dbReference type="InterPro" id="IPR022644">
    <property type="entry name" value="De-COase2_N"/>
</dbReference>
<dbReference type="InterPro" id="IPR000183">
    <property type="entry name" value="Orn/DAP/Arg_de-COase"/>
</dbReference>
<dbReference type="InterPro" id="IPR029066">
    <property type="entry name" value="PLP-binding_barrel"/>
</dbReference>
<dbReference type="NCBIfam" id="NF003763">
    <property type="entry name" value="PRK05354.1"/>
    <property type="match status" value="1"/>
</dbReference>
<dbReference type="NCBIfam" id="TIGR01273">
    <property type="entry name" value="speA"/>
    <property type="match status" value="1"/>
</dbReference>
<dbReference type="PANTHER" id="PTHR43295">
    <property type="entry name" value="ARGININE DECARBOXYLASE"/>
    <property type="match status" value="1"/>
</dbReference>
<dbReference type="PANTHER" id="PTHR43295:SF9">
    <property type="entry name" value="BIOSYNTHETIC ARGININE DECARBOXYLASE"/>
    <property type="match status" value="1"/>
</dbReference>
<dbReference type="Pfam" id="PF17810">
    <property type="entry name" value="Arg_decarb_HB"/>
    <property type="match status" value="1"/>
</dbReference>
<dbReference type="Pfam" id="PF17944">
    <property type="entry name" value="Arg_decarbox_C"/>
    <property type="match status" value="1"/>
</dbReference>
<dbReference type="Pfam" id="PF02784">
    <property type="entry name" value="Orn_Arg_deC_N"/>
    <property type="match status" value="1"/>
</dbReference>
<dbReference type="PIRSF" id="PIRSF001336">
    <property type="entry name" value="Arg_decrbxlase"/>
    <property type="match status" value="1"/>
</dbReference>
<dbReference type="PRINTS" id="PR01180">
    <property type="entry name" value="ARGDCRBXLASE"/>
</dbReference>
<dbReference type="PRINTS" id="PR01179">
    <property type="entry name" value="ODADCRBXLASE"/>
</dbReference>
<dbReference type="SUPFAM" id="SSF51419">
    <property type="entry name" value="PLP-binding barrel"/>
    <property type="match status" value="1"/>
</dbReference>
<reference key="1">
    <citation type="submission" date="2008-02" db="EMBL/GenBank/DDBJ databases">
        <title>Complete sequence of Shewanella woodyi ATCC 51908.</title>
        <authorList>
            <consortium name="US DOE Joint Genome Institute"/>
            <person name="Copeland A."/>
            <person name="Lucas S."/>
            <person name="Lapidus A."/>
            <person name="Glavina del Rio T."/>
            <person name="Dalin E."/>
            <person name="Tice H."/>
            <person name="Bruce D."/>
            <person name="Goodwin L."/>
            <person name="Pitluck S."/>
            <person name="Sims D."/>
            <person name="Brettin T."/>
            <person name="Detter J.C."/>
            <person name="Han C."/>
            <person name="Kuske C.R."/>
            <person name="Schmutz J."/>
            <person name="Larimer F."/>
            <person name="Land M."/>
            <person name="Hauser L."/>
            <person name="Kyrpides N."/>
            <person name="Lykidis A."/>
            <person name="Zhao J.-S."/>
            <person name="Richardson P."/>
        </authorList>
    </citation>
    <scope>NUCLEOTIDE SEQUENCE [LARGE SCALE GENOMIC DNA]</scope>
    <source>
        <strain>ATCC 51908 / MS32</strain>
    </source>
</reference>
<comment type="function">
    <text evidence="1">Catalyzes the biosynthesis of agmatine from arginine.</text>
</comment>
<comment type="catalytic activity">
    <reaction evidence="1">
        <text>L-arginine + H(+) = agmatine + CO2</text>
        <dbReference type="Rhea" id="RHEA:17641"/>
        <dbReference type="ChEBI" id="CHEBI:15378"/>
        <dbReference type="ChEBI" id="CHEBI:16526"/>
        <dbReference type="ChEBI" id="CHEBI:32682"/>
        <dbReference type="ChEBI" id="CHEBI:58145"/>
        <dbReference type="EC" id="4.1.1.19"/>
    </reaction>
</comment>
<comment type="cofactor">
    <cofactor evidence="1">
        <name>Mg(2+)</name>
        <dbReference type="ChEBI" id="CHEBI:18420"/>
    </cofactor>
</comment>
<comment type="cofactor">
    <cofactor evidence="1">
        <name>pyridoxal 5'-phosphate</name>
        <dbReference type="ChEBI" id="CHEBI:597326"/>
    </cofactor>
</comment>
<comment type="pathway">
    <text evidence="1">Amine and polyamine biosynthesis; agmatine biosynthesis; agmatine from L-arginine: step 1/1.</text>
</comment>
<comment type="similarity">
    <text evidence="1">Belongs to the Orn/Lys/Arg decarboxylase class-II family. SpeA subfamily.</text>
</comment>